<accession>C3MXI0</accession>
<gene>
    <name evidence="1" type="primary">thiI</name>
    <name type="ordered locus">M1425_1769</name>
</gene>
<keyword id="KW-0067">ATP-binding</keyword>
<keyword id="KW-0963">Cytoplasm</keyword>
<keyword id="KW-0547">Nucleotide-binding</keyword>
<keyword id="KW-0694">RNA-binding</keyword>
<keyword id="KW-0784">Thiamine biosynthesis</keyword>
<keyword id="KW-0808">Transferase</keyword>
<keyword id="KW-0820">tRNA-binding</keyword>
<feature type="chain" id="PRO_1000201923" description="Probable tRNA sulfurtransferase">
    <location>
        <begin position="1"/>
        <end position="373"/>
    </location>
</feature>
<feature type="domain" description="THUMP" evidence="1">
    <location>
        <begin position="54"/>
        <end position="158"/>
    </location>
</feature>
<feature type="binding site" evidence="1">
    <location>
        <begin position="176"/>
        <end position="177"/>
    </location>
    <ligand>
        <name>ATP</name>
        <dbReference type="ChEBI" id="CHEBI:30616"/>
    </ligand>
</feature>
<feature type="binding site" evidence="1">
    <location>
        <begin position="201"/>
        <end position="202"/>
    </location>
    <ligand>
        <name>ATP</name>
        <dbReference type="ChEBI" id="CHEBI:30616"/>
    </ligand>
</feature>
<feature type="binding site" evidence="1">
    <location>
        <position position="256"/>
    </location>
    <ligand>
        <name>ATP</name>
        <dbReference type="ChEBI" id="CHEBI:30616"/>
    </ligand>
</feature>
<feature type="binding site" evidence="1">
    <location>
        <position position="278"/>
    </location>
    <ligand>
        <name>ATP</name>
        <dbReference type="ChEBI" id="CHEBI:30616"/>
    </ligand>
</feature>
<feature type="binding site" evidence="1">
    <location>
        <position position="287"/>
    </location>
    <ligand>
        <name>ATP</name>
        <dbReference type="ChEBI" id="CHEBI:30616"/>
    </ligand>
</feature>
<name>THII_SACI4</name>
<comment type="function">
    <text evidence="1">Catalyzes the ATP-dependent transfer of a sulfur to tRNA to produce 4-thiouridine in position 8 of tRNAs, which functions as a near-UV photosensor. Also catalyzes the transfer of sulfur to the sulfur carrier protein ThiS, forming ThiS-thiocarboxylate. This is a step in the synthesis of thiazole, in the thiamine biosynthesis pathway. The sulfur is donated as persulfide by IscS.</text>
</comment>
<comment type="catalytic activity">
    <reaction evidence="1">
        <text>[ThiI sulfur-carrier protein]-S-sulfanyl-L-cysteine + a uridine in tRNA + 2 reduced [2Fe-2S]-[ferredoxin] + ATP + H(+) = [ThiI sulfur-carrier protein]-L-cysteine + a 4-thiouridine in tRNA + 2 oxidized [2Fe-2S]-[ferredoxin] + AMP + diphosphate</text>
        <dbReference type="Rhea" id="RHEA:24176"/>
        <dbReference type="Rhea" id="RHEA-COMP:10000"/>
        <dbReference type="Rhea" id="RHEA-COMP:10001"/>
        <dbReference type="Rhea" id="RHEA-COMP:13337"/>
        <dbReference type="Rhea" id="RHEA-COMP:13338"/>
        <dbReference type="Rhea" id="RHEA-COMP:13339"/>
        <dbReference type="Rhea" id="RHEA-COMP:13340"/>
        <dbReference type="ChEBI" id="CHEBI:15378"/>
        <dbReference type="ChEBI" id="CHEBI:29950"/>
        <dbReference type="ChEBI" id="CHEBI:30616"/>
        <dbReference type="ChEBI" id="CHEBI:33019"/>
        <dbReference type="ChEBI" id="CHEBI:33737"/>
        <dbReference type="ChEBI" id="CHEBI:33738"/>
        <dbReference type="ChEBI" id="CHEBI:61963"/>
        <dbReference type="ChEBI" id="CHEBI:65315"/>
        <dbReference type="ChEBI" id="CHEBI:136798"/>
        <dbReference type="ChEBI" id="CHEBI:456215"/>
        <dbReference type="EC" id="2.8.1.4"/>
    </reaction>
</comment>
<comment type="catalytic activity">
    <reaction evidence="1">
        <text>[ThiS sulfur-carrier protein]-C-terminal Gly-Gly-AMP + S-sulfanyl-L-cysteinyl-[cysteine desulfurase] + AH2 = [ThiS sulfur-carrier protein]-C-terminal-Gly-aminoethanethioate + L-cysteinyl-[cysteine desulfurase] + A + AMP + 2 H(+)</text>
        <dbReference type="Rhea" id="RHEA:43340"/>
        <dbReference type="Rhea" id="RHEA-COMP:12157"/>
        <dbReference type="Rhea" id="RHEA-COMP:12158"/>
        <dbReference type="Rhea" id="RHEA-COMP:12910"/>
        <dbReference type="Rhea" id="RHEA-COMP:19908"/>
        <dbReference type="ChEBI" id="CHEBI:13193"/>
        <dbReference type="ChEBI" id="CHEBI:15378"/>
        <dbReference type="ChEBI" id="CHEBI:17499"/>
        <dbReference type="ChEBI" id="CHEBI:29950"/>
        <dbReference type="ChEBI" id="CHEBI:61963"/>
        <dbReference type="ChEBI" id="CHEBI:90618"/>
        <dbReference type="ChEBI" id="CHEBI:232372"/>
        <dbReference type="ChEBI" id="CHEBI:456215"/>
    </reaction>
</comment>
<comment type="pathway">
    <text evidence="1">Cofactor biosynthesis; thiamine diphosphate biosynthesis.</text>
</comment>
<comment type="subcellular location">
    <subcellularLocation>
        <location evidence="1">Cytoplasm</location>
    </subcellularLocation>
</comment>
<comment type="similarity">
    <text evidence="1">Belongs to the ThiI family.</text>
</comment>
<protein>
    <recommendedName>
        <fullName evidence="1">Probable tRNA sulfurtransferase</fullName>
        <ecNumber evidence="1">2.8.1.4</ecNumber>
    </recommendedName>
    <alternativeName>
        <fullName evidence="1">Sulfur carrier protein ThiS sulfurtransferase</fullName>
    </alternativeName>
    <alternativeName>
        <fullName evidence="1">Thiamine biosynthesis protein ThiI</fullName>
    </alternativeName>
    <alternativeName>
        <fullName evidence="1">tRNA 4-thiouridine synthase</fullName>
    </alternativeName>
</protein>
<dbReference type="EC" id="2.8.1.4" evidence="1"/>
<dbReference type="EMBL" id="CP001400">
    <property type="protein sequence ID" value="ACP38514.1"/>
    <property type="molecule type" value="Genomic_DNA"/>
</dbReference>
<dbReference type="RefSeq" id="WP_012711744.1">
    <property type="nucleotide sequence ID" value="NC_012588.1"/>
</dbReference>
<dbReference type="SMR" id="C3MXI0"/>
<dbReference type="GeneID" id="84053366"/>
<dbReference type="KEGG" id="sia:M1425_1769"/>
<dbReference type="HOGENOM" id="CLU_037952_4_0_2"/>
<dbReference type="UniPathway" id="UPA00060"/>
<dbReference type="Proteomes" id="UP000001350">
    <property type="component" value="Chromosome"/>
</dbReference>
<dbReference type="GO" id="GO:0005829">
    <property type="term" value="C:cytosol"/>
    <property type="evidence" value="ECO:0007669"/>
    <property type="project" value="TreeGrafter"/>
</dbReference>
<dbReference type="GO" id="GO:0005524">
    <property type="term" value="F:ATP binding"/>
    <property type="evidence" value="ECO:0007669"/>
    <property type="project" value="UniProtKB-UniRule"/>
</dbReference>
<dbReference type="GO" id="GO:0004810">
    <property type="term" value="F:CCA tRNA nucleotidyltransferase activity"/>
    <property type="evidence" value="ECO:0007669"/>
    <property type="project" value="InterPro"/>
</dbReference>
<dbReference type="GO" id="GO:0000049">
    <property type="term" value="F:tRNA binding"/>
    <property type="evidence" value="ECO:0007669"/>
    <property type="project" value="UniProtKB-UniRule"/>
</dbReference>
<dbReference type="GO" id="GO:0140741">
    <property type="term" value="F:tRNA-uracil-4 sulfurtransferase activity"/>
    <property type="evidence" value="ECO:0007669"/>
    <property type="project" value="UniProtKB-EC"/>
</dbReference>
<dbReference type="GO" id="GO:0009228">
    <property type="term" value="P:thiamine biosynthetic process"/>
    <property type="evidence" value="ECO:0007669"/>
    <property type="project" value="UniProtKB-KW"/>
</dbReference>
<dbReference type="GO" id="GO:0009229">
    <property type="term" value="P:thiamine diphosphate biosynthetic process"/>
    <property type="evidence" value="ECO:0007669"/>
    <property type="project" value="UniProtKB-UniRule"/>
</dbReference>
<dbReference type="GO" id="GO:0052837">
    <property type="term" value="P:thiazole biosynthetic process"/>
    <property type="evidence" value="ECO:0007669"/>
    <property type="project" value="TreeGrafter"/>
</dbReference>
<dbReference type="GO" id="GO:0002937">
    <property type="term" value="P:tRNA 4-thiouridine biosynthesis"/>
    <property type="evidence" value="ECO:0007669"/>
    <property type="project" value="TreeGrafter"/>
</dbReference>
<dbReference type="CDD" id="cd01712">
    <property type="entry name" value="PPase_ThiI"/>
    <property type="match status" value="1"/>
</dbReference>
<dbReference type="CDD" id="cd11716">
    <property type="entry name" value="THUMP_ThiI"/>
    <property type="match status" value="1"/>
</dbReference>
<dbReference type="Gene3D" id="3.30.2130.30">
    <property type="match status" value="1"/>
</dbReference>
<dbReference type="Gene3D" id="3.40.50.620">
    <property type="entry name" value="HUPs"/>
    <property type="match status" value="1"/>
</dbReference>
<dbReference type="HAMAP" id="MF_00021">
    <property type="entry name" value="ThiI"/>
    <property type="match status" value="1"/>
</dbReference>
<dbReference type="InterPro" id="IPR014729">
    <property type="entry name" value="Rossmann-like_a/b/a_fold"/>
</dbReference>
<dbReference type="InterPro" id="IPR020536">
    <property type="entry name" value="ThiI_AANH"/>
</dbReference>
<dbReference type="InterPro" id="IPR054173">
    <property type="entry name" value="ThiI_fer"/>
</dbReference>
<dbReference type="InterPro" id="IPR049961">
    <property type="entry name" value="ThiI_N"/>
</dbReference>
<dbReference type="InterPro" id="IPR004114">
    <property type="entry name" value="THUMP_dom"/>
</dbReference>
<dbReference type="InterPro" id="IPR049962">
    <property type="entry name" value="THUMP_ThiI"/>
</dbReference>
<dbReference type="InterPro" id="IPR003720">
    <property type="entry name" value="tRNA_STrfase"/>
</dbReference>
<dbReference type="InterPro" id="IPR050102">
    <property type="entry name" value="tRNA_sulfurtransferase_ThiI"/>
</dbReference>
<dbReference type="NCBIfam" id="TIGR00342">
    <property type="entry name" value="tRNA uracil 4-sulfurtransferase ThiI"/>
    <property type="match status" value="1"/>
</dbReference>
<dbReference type="PANTHER" id="PTHR43209">
    <property type="entry name" value="TRNA SULFURTRANSFERASE"/>
    <property type="match status" value="1"/>
</dbReference>
<dbReference type="PANTHER" id="PTHR43209:SF1">
    <property type="entry name" value="TRNA SULFURTRANSFERASE"/>
    <property type="match status" value="1"/>
</dbReference>
<dbReference type="Pfam" id="PF02568">
    <property type="entry name" value="ThiI"/>
    <property type="match status" value="1"/>
</dbReference>
<dbReference type="Pfam" id="PF22025">
    <property type="entry name" value="ThiI_fer"/>
    <property type="match status" value="1"/>
</dbReference>
<dbReference type="Pfam" id="PF02926">
    <property type="entry name" value="THUMP"/>
    <property type="match status" value="1"/>
</dbReference>
<dbReference type="SMART" id="SM00981">
    <property type="entry name" value="THUMP"/>
    <property type="match status" value="1"/>
</dbReference>
<dbReference type="SUPFAM" id="SSF52402">
    <property type="entry name" value="Adenine nucleotide alpha hydrolases-like"/>
    <property type="match status" value="1"/>
</dbReference>
<dbReference type="SUPFAM" id="SSF143437">
    <property type="entry name" value="THUMP domain-like"/>
    <property type="match status" value="1"/>
</dbReference>
<dbReference type="PROSITE" id="PS51165">
    <property type="entry name" value="THUMP"/>
    <property type="match status" value="1"/>
</dbReference>
<evidence type="ECO:0000255" key="1">
    <source>
        <dbReference type="HAMAP-Rule" id="MF_00021"/>
    </source>
</evidence>
<sequence length="373" mass="42238">MLIIIRPSGEIALKSPRSRRNFEHTLANNIRSVIKEGKIWRSQGVLFLEVNDDNKNIEELSKVFGIASFSPVMSIKSYNNNLEDIINKAKEVFAEIVKGKIFSVRAKRIGSHNFTSLDVQRKVGEALYPFSRGVNLENPEVEVFIEIRNDVAYFYHKIIKGPKGLPVGVAGKTVVLFSGGIDSPVATWMMMKRGSIPVILNFNLGGSVHRKFVLEELSVLRKWSGGHKLKLFIVNGTDVLIKLSQIEKRNRVVMLKRVMYKVAERLCDKANAKSITTGESLSQVSSQTMTNLYVTEYGIKYPIFRPLIGFDKEEIVELARKIGTYEYSIKLPEYCAISTKARTSVELDEVLKDEENLNIDYEKVLENSEVIEI</sequence>
<reference key="1">
    <citation type="journal article" date="2009" name="Proc. Natl. Acad. Sci. U.S.A.">
        <title>Biogeography of the Sulfolobus islandicus pan-genome.</title>
        <authorList>
            <person name="Reno M.L."/>
            <person name="Held N.L."/>
            <person name="Fields C.J."/>
            <person name="Burke P.V."/>
            <person name="Whitaker R.J."/>
        </authorList>
    </citation>
    <scope>NUCLEOTIDE SEQUENCE [LARGE SCALE GENOMIC DNA]</scope>
    <source>
        <strain>M.14.25 / Kamchatka #1</strain>
    </source>
</reference>
<organism>
    <name type="scientific">Saccharolobus islandicus (strain M.14.25 / Kamchatka #1)</name>
    <name type="common">Sulfolobus islandicus</name>
    <dbReference type="NCBI Taxonomy" id="427317"/>
    <lineage>
        <taxon>Archaea</taxon>
        <taxon>Thermoproteota</taxon>
        <taxon>Thermoprotei</taxon>
        <taxon>Sulfolobales</taxon>
        <taxon>Sulfolobaceae</taxon>
        <taxon>Saccharolobus</taxon>
    </lineage>
</organism>
<proteinExistence type="inferred from homology"/>